<dbReference type="EC" id="2.1.1.17" evidence="1"/>
<dbReference type="EMBL" id="AAYY01000001">
    <property type="protein sequence ID" value="EDP45104.1"/>
    <property type="molecule type" value="Genomic_DNA"/>
</dbReference>
<dbReference type="RefSeq" id="XP_001732318.1">
    <property type="nucleotide sequence ID" value="XM_001732266.1"/>
</dbReference>
<dbReference type="SMR" id="A8PRN6"/>
<dbReference type="FunCoup" id="A8PRN6">
    <property type="interactions" value="42"/>
</dbReference>
<dbReference type="STRING" id="425265.A8PRN6"/>
<dbReference type="GeneID" id="5856624"/>
<dbReference type="KEGG" id="mgl:MGL_0093"/>
<dbReference type="VEuPathDB" id="FungiDB:MGL_0093"/>
<dbReference type="InParanoid" id="A8PRN6"/>
<dbReference type="OMA" id="RIWYSVG"/>
<dbReference type="OrthoDB" id="4583at2759"/>
<dbReference type="UniPathway" id="UPA00753"/>
<dbReference type="Proteomes" id="UP000008837">
    <property type="component" value="Unassembled WGS sequence"/>
</dbReference>
<dbReference type="GO" id="GO:0005789">
    <property type="term" value="C:endoplasmic reticulum membrane"/>
    <property type="evidence" value="ECO:0007669"/>
    <property type="project" value="UniProtKB-SubCell"/>
</dbReference>
<dbReference type="GO" id="GO:0004608">
    <property type="term" value="F:phosphatidylethanolamine N-methyltransferase activity"/>
    <property type="evidence" value="ECO:0007669"/>
    <property type="project" value="UniProtKB-UniRule"/>
</dbReference>
<dbReference type="GO" id="GO:0032259">
    <property type="term" value="P:methylation"/>
    <property type="evidence" value="ECO:0007669"/>
    <property type="project" value="UniProtKB-KW"/>
</dbReference>
<dbReference type="GO" id="GO:0006656">
    <property type="term" value="P:phosphatidylcholine biosynthetic process"/>
    <property type="evidence" value="ECO:0007669"/>
    <property type="project" value="UniProtKB-UniRule"/>
</dbReference>
<dbReference type="HAMAP" id="MF_03217">
    <property type="entry name" value="PEMT"/>
    <property type="match status" value="1"/>
</dbReference>
<dbReference type="InterPro" id="IPR007318">
    <property type="entry name" value="Phopholipid_MeTrfase"/>
</dbReference>
<dbReference type="InterPro" id="IPR016219">
    <property type="entry name" value="Phosphatid-EA_MeTrfase_fun"/>
</dbReference>
<dbReference type="PANTHER" id="PTHR32138">
    <property type="entry name" value="PHOSPHATIDYLETHANOLAMINE N-METHYLTRANSFERASE"/>
    <property type="match status" value="1"/>
</dbReference>
<dbReference type="PANTHER" id="PTHR32138:SF0">
    <property type="entry name" value="PHOSPHATIDYLETHANOLAMINE N-METHYLTRANSFERASE"/>
    <property type="match status" value="1"/>
</dbReference>
<dbReference type="Pfam" id="PF04191">
    <property type="entry name" value="PEMT"/>
    <property type="match status" value="2"/>
</dbReference>
<dbReference type="PIRSF" id="PIRSF000383">
    <property type="entry name" value="PEAMT"/>
    <property type="match status" value="1"/>
</dbReference>
<dbReference type="PROSITE" id="PS51598">
    <property type="entry name" value="SAM_CHO2"/>
    <property type="match status" value="1"/>
</dbReference>
<sequence length="970" mass="109788">MKAESSSMAEWHASEGLRQRYALDEAKQGDASRKESVQDELTDTKDDPAAEAMGGSPSMVLGRTPDGRLFHVIDTPDMVTSIFRLDRPKAPLDILTLVLLLWQVCLFCVLPRKQAQVFFAVYFAFWRIMYNVGLGYVLTKQSRSRWIVRMLDSSGWLDACKNPRMHAWVQYHFKTKLGASSQRIAAAPIDFQAWILFRSVVDVILLNDVTAYAFFALSNIQGLGEHGVLLFVIRWLLGLLLLAFNAWVKLDAHRVVKDYAWYWGDCFFLCLQKLKFDGVYEVAPDPMYSIGYIGYYGLSLLTGSYAVLYVSLAAHASQLLFLVLFENPHMDRVYGERVPIAARVSERRPSDVPPATGVQRSREEIRTPQLAGAASAANGSYATSERGTAAVPSPPCTNVHDLHHRLFRNDNVVLSHIDLFRSSDFLLVLCLIYALSPLVLTRCGPRALLLFATIHAVAWRLFHSFGLGFALRWQSEERWIVHHFLKHYHFADGQAAVTESFSHWKTIYNTSLIMTYVSFALLAIRSYTSWTDNIYRLRYVLGVLLILVHMWSARSSYRVLGPFGWLYGDFFIDAYPKRLSYTGIYRFLNNPERSMGSAAFFGMALLSGSLTATVVAQLAHLSHWWFLGCVEGPHMRRLYGADVRQDSGVTKQLRQLCQSQWLRAAQPSIEELQGILQRAQGVVRQLLEQSRPRLERLADDTCALLQQKAEHVLTMHTGDSVQQIDQAKYRVTPVASPHTHEQRFHVGEPIIVQWMAAENHSRRDWIGLYAVNALDAHPDEHHGSLLVTRTTSRGKWLGVAEDEWEGHVHVGLTQSPLGTHGVSSVDTDTHQVSGVSVFQGSRLPWAAPGTYELRYHHDNTHYVLAKSERFTIYADSPEDPYSFDETFMILSKILRYALVEAPSTTSAAAHEYESADKADLTLWTQDQAQHIRDGIWSAFHVDFTKDVVIASANTTLLTRDILMARQLLSR</sequence>
<organism>
    <name type="scientific">Malassezia globosa (strain ATCC MYA-4612 / CBS 7966)</name>
    <name type="common">Dandruff-associated fungus</name>
    <dbReference type="NCBI Taxonomy" id="425265"/>
    <lineage>
        <taxon>Eukaryota</taxon>
        <taxon>Fungi</taxon>
        <taxon>Dikarya</taxon>
        <taxon>Basidiomycota</taxon>
        <taxon>Ustilaginomycotina</taxon>
        <taxon>Malasseziomycetes</taxon>
        <taxon>Malasseziales</taxon>
        <taxon>Malasseziaceae</taxon>
        <taxon>Malassezia</taxon>
    </lineage>
</organism>
<reference key="1">
    <citation type="journal article" date="2007" name="Proc. Natl. Acad. Sci. U.S.A.">
        <title>Dandruff-associated Malassezia genomes reveal convergent and divergent virulence traits shared with plant and human fungal pathogens.</title>
        <authorList>
            <person name="Xu J."/>
            <person name="Saunders C.W."/>
            <person name="Hu P."/>
            <person name="Grant R.A."/>
            <person name="Boekhout T."/>
            <person name="Kuramae E.E."/>
            <person name="Kronstad J.W."/>
            <person name="DeAngelis Y.M."/>
            <person name="Reeder N.L."/>
            <person name="Johnstone K.R."/>
            <person name="Leland M."/>
            <person name="Fieno A.M."/>
            <person name="Begley W.M."/>
            <person name="Sun Y."/>
            <person name="Lacey M.P."/>
            <person name="Chaudhary T."/>
            <person name="Keough T."/>
            <person name="Chu L."/>
            <person name="Sears R."/>
            <person name="Yuan B."/>
            <person name="Dawson T.L. Jr."/>
        </authorList>
    </citation>
    <scope>NUCLEOTIDE SEQUENCE [LARGE SCALE GENOMIC DNA]</scope>
    <source>
        <strain>ATCC MYA-4612 / CBS 7966</strain>
    </source>
</reference>
<evidence type="ECO:0000255" key="1">
    <source>
        <dbReference type="HAMAP-Rule" id="MF_03217"/>
    </source>
</evidence>
<evidence type="ECO:0000256" key="2">
    <source>
        <dbReference type="SAM" id="MobiDB-lite"/>
    </source>
</evidence>
<name>CHO2_MALGO</name>
<comment type="function">
    <text evidence="1">Catalyzes the first step of the methylation pathway of phosphatidylcholine biosynthesis, the SAM-dependent methylation of phosphatidylethanolamine (PE) to phosphatidylmonomethylethanolamine (PMME).</text>
</comment>
<comment type="catalytic activity">
    <reaction evidence="1">
        <text>a 1,2-diacyl-sn-glycero-3-phosphoethanolamine + S-adenosyl-L-methionine = a 1,2-diacyl-sn-glycero-3-phospho-N-methylethanolamine + S-adenosyl-L-homocysteine + H(+)</text>
        <dbReference type="Rhea" id="RHEA:11164"/>
        <dbReference type="ChEBI" id="CHEBI:15378"/>
        <dbReference type="ChEBI" id="CHEBI:57856"/>
        <dbReference type="ChEBI" id="CHEBI:59789"/>
        <dbReference type="ChEBI" id="CHEBI:64573"/>
        <dbReference type="ChEBI" id="CHEBI:64612"/>
        <dbReference type="EC" id="2.1.1.17"/>
    </reaction>
</comment>
<comment type="pathway">
    <text evidence="1">Phospholipid metabolism; phosphatidylcholine biosynthesis.</text>
</comment>
<comment type="subcellular location">
    <subcellularLocation>
        <location evidence="1">Endoplasmic reticulum membrane</location>
        <topology evidence="1">Multi-pass membrane protein</topology>
    </subcellularLocation>
</comment>
<comment type="similarity">
    <text evidence="1">Belongs to the class VI-like SAM-binding methyltransferase superfamily. CHO2 family.</text>
</comment>
<gene>
    <name type="primary">CHO2</name>
    <name type="ORF">MGL_0093</name>
</gene>
<feature type="chain" id="PRO_0000405896" description="Phosphatidylethanolamine N-methyltransferase">
    <location>
        <begin position="1"/>
        <end position="970"/>
    </location>
</feature>
<feature type="topological domain" description="Lumenal" evidence="1">
    <location>
        <begin position="1"/>
        <end position="89"/>
    </location>
</feature>
<feature type="transmembrane region" description="Helical" evidence="1">
    <location>
        <begin position="90"/>
        <end position="110"/>
    </location>
</feature>
<feature type="topological domain" description="Cytoplasmic" evidence="1">
    <location>
        <begin position="111"/>
        <end position="116"/>
    </location>
</feature>
<feature type="transmembrane region" description="Helical" evidence="1">
    <location>
        <begin position="117"/>
        <end position="137"/>
    </location>
</feature>
<feature type="topological domain" description="Lumenal" evidence="1">
    <location>
        <begin position="138"/>
        <end position="199"/>
    </location>
</feature>
<feature type="transmembrane region" description="Helical" evidence="1">
    <location>
        <begin position="200"/>
        <end position="220"/>
    </location>
</feature>
<feature type="topological domain" description="Cytoplasmic" evidence="1">
    <location>
        <begin position="221"/>
        <end position="227"/>
    </location>
</feature>
<feature type="transmembrane region" description="Helical" evidence="1">
    <location>
        <begin position="228"/>
        <end position="248"/>
    </location>
</feature>
<feature type="topological domain" description="Lumenal" evidence="1">
    <location>
        <begin position="249"/>
        <end position="281"/>
    </location>
</feature>
<feature type="transmembrane region" description="Helical" evidence="1">
    <location>
        <begin position="282"/>
        <end position="302"/>
    </location>
</feature>
<feature type="topological domain" description="Cytoplasmic" evidence="1">
    <location>
        <begin position="303"/>
        <end position="304"/>
    </location>
</feature>
<feature type="transmembrane region" description="Helical" evidence="1">
    <location>
        <begin position="305"/>
        <end position="325"/>
    </location>
</feature>
<feature type="topological domain" description="Lumenal" evidence="1">
    <location>
        <begin position="326"/>
        <end position="424"/>
    </location>
</feature>
<feature type="transmembrane region" description="Helical" evidence="1">
    <location>
        <begin position="425"/>
        <end position="445"/>
    </location>
</feature>
<feature type="topological domain" description="Cytoplasmic" evidence="1">
    <location>
        <position position="446"/>
    </location>
</feature>
<feature type="transmembrane region" description="Helical" evidence="1">
    <location>
        <begin position="447"/>
        <end position="467"/>
    </location>
</feature>
<feature type="topological domain" description="Lumenal" evidence="1">
    <location>
        <begin position="468"/>
        <end position="503"/>
    </location>
</feature>
<feature type="transmembrane region" description="Helical" evidence="1">
    <location>
        <begin position="504"/>
        <end position="524"/>
    </location>
</feature>
<feature type="topological domain" description="Cytoplasmic" evidence="1">
    <location>
        <begin position="525"/>
        <end position="533"/>
    </location>
</feature>
<feature type="transmembrane region" description="Helical" evidence="1">
    <location>
        <begin position="534"/>
        <end position="553"/>
    </location>
</feature>
<feature type="topological domain" description="Lumenal" evidence="1">
    <location>
        <begin position="554"/>
        <end position="594"/>
    </location>
</feature>
<feature type="transmembrane region" description="Helical" evidence="1">
    <location>
        <begin position="595"/>
        <end position="615"/>
    </location>
</feature>
<feature type="topological domain" description="Cytoplasmic" evidence="1">
    <location>
        <begin position="616"/>
        <end position="970"/>
    </location>
</feature>
<feature type="region of interest" description="Disordered" evidence="2">
    <location>
        <begin position="24"/>
        <end position="59"/>
    </location>
</feature>
<feature type="compositionally biased region" description="Basic and acidic residues" evidence="2">
    <location>
        <begin position="24"/>
        <end position="48"/>
    </location>
</feature>
<protein>
    <recommendedName>
        <fullName evidence="1">Phosphatidylethanolamine N-methyltransferase</fullName>
        <shortName evidence="1">PE methyltransferase</shortName>
        <shortName evidence="1">PEAMT</shortName>
        <shortName evidence="1">PEMT</shortName>
        <ecNumber evidence="1">2.1.1.17</ecNumber>
    </recommendedName>
</protein>
<accession>A8PRN6</accession>
<proteinExistence type="inferred from homology"/>
<keyword id="KW-0256">Endoplasmic reticulum</keyword>
<keyword id="KW-0444">Lipid biosynthesis</keyword>
<keyword id="KW-0443">Lipid metabolism</keyword>
<keyword id="KW-0472">Membrane</keyword>
<keyword id="KW-0489">Methyltransferase</keyword>
<keyword id="KW-0594">Phospholipid biosynthesis</keyword>
<keyword id="KW-1208">Phospholipid metabolism</keyword>
<keyword id="KW-1185">Reference proteome</keyword>
<keyword id="KW-0949">S-adenosyl-L-methionine</keyword>
<keyword id="KW-0808">Transferase</keyword>
<keyword id="KW-0812">Transmembrane</keyword>
<keyword id="KW-1133">Transmembrane helix</keyword>